<proteinExistence type="evidence at transcript level"/>
<name>GFOD2_BOVIN</name>
<dbReference type="EC" id="1.-.-.-"/>
<dbReference type="EMBL" id="BT021179">
    <property type="protein sequence ID" value="AAX31361.1"/>
    <property type="molecule type" value="mRNA"/>
</dbReference>
<dbReference type="EMBL" id="BT025419">
    <property type="protein sequence ID" value="ABF57375.1"/>
    <property type="molecule type" value="mRNA"/>
</dbReference>
<dbReference type="EMBL" id="BC123696">
    <property type="protein sequence ID" value="AAI23697.1"/>
    <property type="molecule type" value="mRNA"/>
</dbReference>
<dbReference type="RefSeq" id="NP_001014863.1">
    <property type="nucleotide sequence ID" value="NM_001014863.2"/>
</dbReference>
<dbReference type="RefSeq" id="XP_005218537.1">
    <property type="nucleotide sequence ID" value="XM_005218480.5"/>
</dbReference>
<dbReference type="RefSeq" id="XP_005218538.1">
    <property type="nucleotide sequence ID" value="XM_005218481.3"/>
</dbReference>
<dbReference type="RefSeq" id="XP_005218544.1">
    <property type="nucleotide sequence ID" value="XM_005218487.3"/>
</dbReference>
<dbReference type="RefSeq" id="XP_010812737.1">
    <property type="nucleotide sequence ID" value="XM_010814435.4"/>
</dbReference>
<dbReference type="RefSeq" id="XP_015331205.1">
    <property type="nucleotide sequence ID" value="XM_015475719.1"/>
</dbReference>
<dbReference type="RefSeq" id="XP_015331206.1">
    <property type="nucleotide sequence ID" value="XM_015475720.1"/>
</dbReference>
<dbReference type="RefSeq" id="XP_024833811.1">
    <property type="nucleotide sequence ID" value="XM_024978043.2"/>
</dbReference>
<dbReference type="RefSeq" id="XP_059732545.1">
    <property type="nucleotide sequence ID" value="XM_059876562.1"/>
</dbReference>
<dbReference type="RefSeq" id="XP_059732546.1">
    <property type="nucleotide sequence ID" value="XM_059876563.1"/>
</dbReference>
<dbReference type="RefSeq" id="XP_059732547.1">
    <property type="nucleotide sequence ID" value="XM_059876564.1"/>
</dbReference>
<dbReference type="RefSeq" id="XP_059732548.1">
    <property type="nucleotide sequence ID" value="XM_059876565.1"/>
</dbReference>
<dbReference type="RefSeq" id="XP_059732549.1">
    <property type="nucleotide sequence ID" value="XM_059876566.1"/>
</dbReference>
<dbReference type="RefSeq" id="XP_059732550.1">
    <property type="nucleotide sequence ID" value="XM_059876567.1"/>
</dbReference>
<dbReference type="SMR" id="Q5BIP5"/>
<dbReference type="FunCoup" id="Q5BIP5">
    <property type="interactions" value="2917"/>
</dbReference>
<dbReference type="STRING" id="9913.ENSBTAP00000025164"/>
<dbReference type="PaxDb" id="9913-ENSBTAP00000025164"/>
<dbReference type="Ensembl" id="ENSBTAT00000025164.6">
    <property type="protein sequence ID" value="ENSBTAP00000025164.5"/>
    <property type="gene ID" value="ENSBTAG00000018908.6"/>
</dbReference>
<dbReference type="GeneID" id="507361"/>
<dbReference type="KEGG" id="bta:507361"/>
<dbReference type="CTD" id="81577"/>
<dbReference type="VEuPathDB" id="HostDB:ENSBTAG00000018908"/>
<dbReference type="VGNC" id="VGNC:29329">
    <property type="gene designation" value="GFOD2"/>
</dbReference>
<dbReference type="eggNOG" id="KOG2742">
    <property type="taxonomic scope" value="Eukaryota"/>
</dbReference>
<dbReference type="GeneTree" id="ENSGT00940000156501"/>
<dbReference type="HOGENOM" id="CLU_023194_8_0_1"/>
<dbReference type="InParanoid" id="Q5BIP5"/>
<dbReference type="OMA" id="YVGEIQV"/>
<dbReference type="OrthoDB" id="446809at2759"/>
<dbReference type="TreeFam" id="TF323246"/>
<dbReference type="Proteomes" id="UP000009136">
    <property type="component" value="Chromosome 18"/>
</dbReference>
<dbReference type="Bgee" id="ENSBTAG00000018908">
    <property type="expression patterns" value="Expressed in surface of tongue and 103 other cell types or tissues"/>
</dbReference>
<dbReference type="GO" id="GO:0031012">
    <property type="term" value="C:extracellular matrix"/>
    <property type="evidence" value="ECO:0000318"/>
    <property type="project" value="GO_Central"/>
</dbReference>
<dbReference type="GO" id="GO:0005576">
    <property type="term" value="C:extracellular region"/>
    <property type="evidence" value="ECO:0007669"/>
    <property type="project" value="UniProtKB-KW"/>
</dbReference>
<dbReference type="GO" id="GO:0000166">
    <property type="term" value="F:nucleotide binding"/>
    <property type="evidence" value="ECO:0007669"/>
    <property type="project" value="InterPro"/>
</dbReference>
<dbReference type="GO" id="GO:0016491">
    <property type="term" value="F:oxidoreductase activity"/>
    <property type="evidence" value="ECO:0007669"/>
    <property type="project" value="UniProtKB-KW"/>
</dbReference>
<dbReference type="GO" id="GO:0030198">
    <property type="term" value="P:extracellular matrix organization"/>
    <property type="evidence" value="ECO:0000318"/>
    <property type="project" value="GO_Central"/>
</dbReference>
<dbReference type="FunFam" id="3.30.360.10:FF:000025">
    <property type="entry name" value="Glucose-fructose oxidoreductase domain-containing protein 2"/>
    <property type="match status" value="1"/>
</dbReference>
<dbReference type="FunFam" id="3.40.50.720:FF:000233">
    <property type="entry name" value="Glucose-fructose oxidoreductase domain-containing protein 2"/>
    <property type="match status" value="1"/>
</dbReference>
<dbReference type="Gene3D" id="3.30.360.10">
    <property type="entry name" value="Dihydrodipicolinate Reductase, domain 2"/>
    <property type="match status" value="1"/>
</dbReference>
<dbReference type="Gene3D" id="3.40.50.720">
    <property type="entry name" value="NAD(P)-binding Rossmann-like Domain"/>
    <property type="match status" value="1"/>
</dbReference>
<dbReference type="InterPro" id="IPR000683">
    <property type="entry name" value="Gfo/Idh/MocA-like_OxRdtase_N"/>
</dbReference>
<dbReference type="InterPro" id="IPR050463">
    <property type="entry name" value="Gfo/Idh/MocA_oxidrdct_glycsds"/>
</dbReference>
<dbReference type="InterPro" id="IPR055170">
    <property type="entry name" value="GFO_IDH_MocA-like_dom"/>
</dbReference>
<dbReference type="InterPro" id="IPR036291">
    <property type="entry name" value="NAD(P)-bd_dom_sf"/>
</dbReference>
<dbReference type="PANTHER" id="PTHR43818">
    <property type="entry name" value="BCDNA.GH03377"/>
    <property type="match status" value="1"/>
</dbReference>
<dbReference type="PANTHER" id="PTHR43818:SF8">
    <property type="entry name" value="GLUCOSE-FRUCTOSE OXIDOREDUCTASE DOMAIN-CONTAINING PROTEIN 2"/>
    <property type="match status" value="1"/>
</dbReference>
<dbReference type="Pfam" id="PF01408">
    <property type="entry name" value="GFO_IDH_MocA"/>
    <property type="match status" value="1"/>
</dbReference>
<dbReference type="Pfam" id="PF22725">
    <property type="entry name" value="GFO_IDH_MocA_C3"/>
    <property type="match status" value="1"/>
</dbReference>
<dbReference type="SUPFAM" id="SSF55347">
    <property type="entry name" value="Glyceraldehyde-3-phosphate dehydrogenase-like, C-terminal domain"/>
    <property type="match status" value="1"/>
</dbReference>
<dbReference type="SUPFAM" id="SSF51735">
    <property type="entry name" value="NAD(P)-binding Rossmann-fold domains"/>
    <property type="match status" value="1"/>
</dbReference>
<reference key="1">
    <citation type="journal article" date="2005" name="BMC Genomics">
        <title>Characterization of 954 bovine full-CDS cDNA sequences.</title>
        <authorList>
            <person name="Harhay G.P."/>
            <person name="Sonstegard T.S."/>
            <person name="Keele J.W."/>
            <person name="Heaton M.P."/>
            <person name="Clawson M.L."/>
            <person name="Snelling W.M."/>
            <person name="Wiedmann R.T."/>
            <person name="Van Tassell C.P."/>
            <person name="Smith T.P.L."/>
        </authorList>
    </citation>
    <scope>NUCLEOTIDE SEQUENCE [LARGE SCALE MRNA]</scope>
</reference>
<reference key="2">
    <citation type="submission" date="2006-09" db="EMBL/GenBank/DDBJ databases">
        <authorList>
            <consortium name="NIH - Mammalian Gene Collection (MGC) project"/>
        </authorList>
    </citation>
    <scope>NUCLEOTIDE SEQUENCE [LARGE SCALE MRNA]</scope>
    <source>
        <strain>Hereford</strain>
        <tissue>Hippocampus</tissue>
    </source>
</reference>
<gene>
    <name type="primary">GFOD2</name>
</gene>
<evidence type="ECO:0000250" key="1"/>
<evidence type="ECO:0000255" key="2"/>
<evidence type="ECO:0000305" key="3"/>
<organism>
    <name type="scientific">Bos taurus</name>
    <name type="common">Bovine</name>
    <dbReference type="NCBI Taxonomy" id="9913"/>
    <lineage>
        <taxon>Eukaryota</taxon>
        <taxon>Metazoa</taxon>
        <taxon>Chordata</taxon>
        <taxon>Craniata</taxon>
        <taxon>Vertebrata</taxon>
        <taxon>Euteleostomi</taxon>
        <taxon>Mammalia</taxon>
        <taxon>Eutheria</taxon>
        <taxon>Laurasiatheria</taxon>
        <taxon>Artiodactyla</taxon>
        <taxon>Ruminantia</taxon>
        <taxon>Pecora</taxon>
        <taxon>Bovidae</taxon>
        <taxon>Bovinae</taxon>
        <taxon>Bos</taxon>
    </lineage>
</organism>
<accession>Q5BIP5</accession>
<sequence length="385" mass="42145">MKMLPGVGVFGTGSSARVLVPLLRAEGFTVQALWGKTEEEAKQLAEEMNIAFYTSRTDDVLLHQDVDLVCINMPPPLTRQISVKALGIGKNVVCEKAATSVDAFRMVTASRYYPQLMSLVGNVLRFLPAFVRMKQLIAEHYVGAVMICDARVYSGSLLSPNYGWICDELMGGGGLHTMGTYIVDLLTHLTGQRAEKVHGLLKTFVRQNAAIRGIRHVTSDDFCFFQMLMGGGVCSTVTLNFNMPGAFVHEVMVVGSAGRLVARGADLYGQKNSAPQEELLLRDSLAVGAGLPEQGAQDVPLLYLKGMVYMVQALRQSFQGQGDRRTWDHTPVSMAASFEDGLYMQSVVDAIKRSSRSGEWEAVEVLAEEPDANQNLCEALQRNNL</sequence>
<keyword id="KW-0272">Extracellular matrix</keyword>
<keyword id="KW-0560">Oxidoreductase</keyword>
<keyword id="KW-1185">Reference proteome</keyword>
<keyword id="KW-0964">Secreted</keyword>
<keyword id="KW-0732">Signal</keyword>
<feature type="signal peptide" evidence="2">
    <location>
        <begin position="1"/>
        <end position="25"/>
    </location>
</feature>
<feature type="chain" id="PRO_0000282971" description="Glucose-fructose oxidoreductase domain-containing protein 2">
    <location>
        <begin position="26"/>
        <end position="385"/>
    </location>
</feature>
<comment type="function">
    <text evidence="1">Promotes matrix assembly.</text>
</comment>
<comment type="subcellular location">
    <subcellularLocation>
        <location evidence="1">Secreted</location>
        <location evidence="1">Extracellular space</location>
        <location evidence="1">Extracellular matrix</location>
    </subcellularLocation>
</comment>
<comment type="similarity">
    <text evidence="3">Belongs to the Gfo/Idh/MocA family.</text>
</comment>
<protein>
    <recommendedName>
        <fullName>Glucose-fructose oxidoreductase domain-containing protein 2</fullName>
        <ecNumber>1.-.-.-</ecNumber>
    </recommendedName>
</protein>